<sequence length="141" mass="15394">MAIERTLSIIKPDAVAKNVIGQIYSRFENAGLKIVASRMVHLSRADAEKFYAVHAARPFFKDLVDFMISGPVVVQALEGENAILKHRDLMGATDPKKAEKGTIRADFADSIDANAVHGSDAAETAAVEIAFFFPQVNVYSR</sequence>
<keyword id="KW-0067">ATP-binding</keyword>
<keyword id="KW-0963">Cytoplasm</keyword>
<keyword id="KW-0418">Kinase</keyword>
<keyword id="KW-0460">Magnesium</keyword>
<keyword id="KW-0479">Metal-binding</keyword>
<keyword id="KW-0546">Nucleotide metabolism</keyword>
<keyword id="KW-0547">Nucleotide-binding</keyword>
<keyword id="KW-0597">Phosphoprotein</keyword>
<keyword id="KW-0808">Transferase</keyword>
<dbReference type="EC" id="2.7.4.6" evidence="1"/>
<dbReference type="EMBL" id="CP001052">
    <property type="protein sequence ID" value="ACD16939.1"/>
    <property type="molecule type" value="Genomic_DNA"/>
</dbReference>
<dbReference type="RefSeq" id="WP_012433533.1">
    <property type="nucleotide sequence ID" value="NC_010681.1"/>
</dbReference>
<dbReference type="SMR" id="B2SXT3"/>
<dbReference type="STRING" id="398527.Bphyt_2544"/>
<dbReference type="GeneID" id="97055046"/>
<dbReference type="KEGG" id="bpy:Bphyt_2544"/>
<dbReference type="eggNOG" id="COG0105">
    <property type="taxonomic scope" value="Bacteria"/>
</dbReference>
<dbReference type="HOGENOM" id="CLU_060216_8_1_4"/>
<dbReference type="OrthoDB" id="9801161at2"/>
<dbReference type="Proteomes" id="UP000001739">
    <property type="component" value="Chromosome 1"/>
</dbReference>
<dbReference type="GO" id="GO:0005737">
    <property type="term" value="C:cytoplasm"/>
    <property type="evidence" value="ECO:0007669"/>
    <property type="project" value="UniProtKB-SubCell"/>
</dbReference>
<dbReference type="GO" id="GO:0005524">
    <property type="term" value="F:ATP binding"/>
    <property type="evidence" value="ECO:0007669"/>
    <property type="project" value="UniProtKB-UniRule"/>
</dbReference>
<dbReference type="GO" id="GO:0046872">
    <property type="term" value="F:metal ion binding"/>
    <property type="evidence" value="ECO:0007669"/>
    <property type="project" value="UniProtKB-KW"/>
</dbReference>
<dbReference type="GO" id="GO:0004550">
    <property type="term" value="F:nucleoside diphosphate kinase activity"/>
    <property type="evidence" value="ECO:0007669"/>
    <property type="project" value="UniProtKB-UniRule"/>
</dbReference>
<dbReference type="GO" id="GO:0006241">
    <property type="term" value="P:CTP biosynthetic process"/>
    <property type="evidence" value="ECO:0007669"/>
    <property type="project" value="UniProtKB-UniRule"/>
</dbReference>
<dbReference type="GO" id="GO:0006183">
    <property type="term" value="P:GTP biosynthetic process"/>
    <property type="evidence" value="ECO:0007669"/>
    <property type="project" value="UniProtKB-UniRule"/>
</dbReference>
<dbReference type="GO" id="GO:0006228">
    <property type="term" value="P:UTP biosynthetic process"/>
    <property type="evidence" value="ECO:0007669"/>
    <property type="project" value="UniProtKB-UniRule"/>
</dbReference>
<dbReference type="CDD" id="cd04413">
    <property type="entry name" value="NDPk_I"/>
    <property type="match status" value="1"/>
</dbReference>
<dbReference type="FunFam" id="3.30.70.141:FF:000001">
    <property type="entry name" value="Nucleoside diphosphate kinase"/>
    <property type="match status" value="1"/>
</dbReference>
<dbReference type="Gene3D" id="3.30.70.141">
    <property type="entry name" value="Nucleoside diphosphate kinase-like domain"/>
    <property type="match status" value="1"/>
</dbReference>
<dbReference type="HAMAP" id="MF_00451">
    <property type="entry name" value="NDP_kinase"/>
    <property type="match status" value="1"/>
</dbReference>
<dbReference type="InterPro" id="IPR034907">
    <property type="entry name" value="NDK-like_dom"/>
</dbReference>
<dbReference type="InterPro" id="IPR036850">
    <property type="entry name" value="NDK-like_dom_sf"/>
</dbReference>
<dbReference type="InterPro" id="IPR001564">
    <property type="entry name" value="Nucleoside_diP_kinase"/>
</dbReference>
<dbReference type="NCBIfam" id="NF001908">
    <property type="entry name" value="PRK00668.1"/>
    <property type="match status" value="1"/>
</dbReference>
<dbReference type="PANTHER" id="PTHR46161">
    <property type="entry name" value="NUCLEOSIDE DIPHOSPHATE KINASE"/>
    <property type="match status" value="1"/>
</dbReference>
<dbReference type="PANTHER" id="PTHR46161:SF3">
    <property type="entry name" value="NUCLEOSIDE DIPHOSPHATE KINASE DDB_G0292928-RELATED"/>
    <property type="match status" value="1"/>
</dbReference>
<dbReference type="Pfam" id="PF00334">
    <property type="entry name" value="NDK"/>
    <property type="match status" value="1"/>
</dbReference>
<dbReference type="PRINTS" id="PR01243">
    <property type="entry name" value="NUCDPKINASE"/>
</dbReference>
<dbReference type="SMART" id="SM00562">
    <property type="entry name" value="NDK"/>
    <property type="match status" value="1"/>
</dbReference>
<dbReference type="SUPFAM" id="SSF54919">
    <property type="entry name" value="Nucleoside diphosphate kinase, NDK"/>
    <property type="match status" value="1"/>
</dbReference>
<dbReference type="PROSITE" id="PS51374">
    <property type="entry name" value="NDPK_LIKE"/>
    <property type="match status" value="1"/>
</dbReference>
<name>NDK_PARPJ</name>
<evidence type="ECO:0000255" key="1">
    <source>
        <dbReference type="HAMAP-Rule" id="MF_00451"/>
    </source>
</evidence>
<proteinExistence type="inferred from homology"/>
<organism>
    <name type="scientific">Paraburkholderia phytofirmans (strain DSM 17436 / LMG 22146 / PsJN)</name>
    <name type="common">Burkholderia phytofirmans</name>
    <dbReference type="NCBI Taxonomy" id="398527"/>
    <lineage>
        <taxon>Bacteria</taxon>
        <taxon>Pseudomonadati</taxon>
        <taxon>Pseudomonadota</taxon>
        <taxon>Betaproteobacteria</taxon>
        <taxon>Burkholderiales</taxon>
        <taxon>Burkholderiaceae</taxon>
        <taxon>Paraburkholderia</taxon>
    </lineage>
</organism>
<comment type="function">
    <text evidence="1">Major role in the synthesis of nucleoside triphosphates other than ATP. The ATP gamma phosphate is transferred to the NDP beta phosphate via a ping-pong mechanism, using a phosphorylated active-site intermediate.</text>
</comment>
<comment type="catalytic activity">
    <reaction evidence="1">
        <text>a 2'-deoxyribonucleoside 5'-diphosphate + ATP = a 2'-deoxyribonucleoside 5'-triphosphate + ADP</text>
        <dbReference type="Rhea" id="RHEA:44640"/>
        <dbReference type="ChEBI" id="CHEBI:30616"/>
        <dbReference type="ChEBI" id="CHEBI:61560"/>
        <dbReference type="ChEBI" id="CHEBI:73316"/>
        <dbReference type="ChEBI" id="CHEBI:456216"/>
        <dbReference type="EC" id="2.7.4.6"/>
    </reaction>
</comment>
<comment type="catalytic activity">
    <reaction evidence="1">
        <text>a ribonucleoside 5'-diphosphate + ATP = a ribonucleoside 5'-triphosphate + ADP</text>
        <dbReference type="Rhea" id="RHEA:18113"/>
        <dbReference type="ChEBI" id="CHEBI:30616"/>
        <dbReference type="ChEBI" id="CHEBI:57930"/>
        <dbReference type="ChEBI" id="CHEBI:61557"/>
        <dbReference type="ChEBI" id="CHEBI:456216"/>
        <dbReference type="EC" id="2.7.4.6"/>
    </reaction>
</comment>
<comment type="cofactor">
    <cofactor evidence="1">
        <name>Mg(2+)</name>
        <dbReference type="ChEBI" id="CHEBI:18420"/>
    </cofactor>
</comment>
<comment type="subunit">
    <text evidence="1">Homotetramer.</text>
</comment>
<comment type="subcellular location">
    <subcellularLocation>
        <location evidence="1">Cytoplasm</location>
    </subcellularLocation>
</comment>
<comment type="similarity">
    <text evidence="1">Belongs to the NDK family.</text>
</comment>
<accession>B2SXT3</accession>
<gene>
    <name evidence="1" type="primary">ndk</name>
    <name type="ordered locus">Bphyt_2544</name>
</gene>
<feature type="chain" id="PRO_1000124941" description="Nucleoside diphosphate kinase">
    <location>
        <begin position="1"/>
        <end position="141"/>
    </location>
</feature>
<feature type="active site" description="Pros-phosphohistidine intermediate" evidence="1">
    <location>
        <position position="117"/>
    </location>
</feature>
<feature type="binding site" evidence="1">
    <location>
        <position position="11"/>
    </location>
    <ligand>
        <name>ATP</name>
        <dbReference type="ChEBI" id="CHEBI:30616"/>
    </ligand>
</feature>
<feature type="binding site" evidence="1">
    <location>
        <position position="59"/>
    </location>
    <ligand>
        <name>ATP</name>
        <dbReference type="ChEBI" id="CHEBI:30616"/>
    </ligand>
</feature>
<feature type="binding site" evidence="1">
    <location>
        <position position="87"/>
    </location>
    <ligand>
        <name>ATP</name>
        <dbReference type="ChEBI" id="CHEBI:30616"/>
    </ligand>
</feature>
<feature type="binding site" evidence="1">
    <location>
        <position position="93"/>
    </location>
    <ligand>
        <name>ATP</name>
        <dbReference type="ChEBI" id="CHEBI:30616"/>
    </ligand>
</feature>
<feature type="binding site" evidence="1">
    <location>
        <position position="104"/>
    </location>
    <ligand>
        <name>ATP</name>
        <dbReference type="ChEBI" id="CHEBI:30616"/>
    </ligand>
</feature>
<feature type="binding site" evidence="1">
    <location>
        <position position="114"/>
    </location>
    <ligand>
        <name>ATP</name>
        <dbReference type="ChEBI" id="CHEBI:30616"/>
    </ligand>
</feature>
<protein>
    <recommendedName>
        <fullName evidence="1">Nucleoside diphosphate kinase</fullName>
        <shortName evidence="1">NDK</shortName>
        <shortName evidence="1">NDP kinase</shortName>
        <ecNumber evidence="1">2.7.4.6</ecNumber>
    </recommendedName>
    <alternativeName>
        <fullName evidence="1">Nucleoside-2-P kinase</fullName>
    </alternativeName>
</protein>
<reference key="1">
    <citation type="journal article" date="2011" name="J. Bacteriol.">
        <title>Complete genome sequence of the plant growth-promoting endophyte Burkholderia phytofirmans strain PsJN.</title>
        <authorList>
            <person name="Weilharter A."/>
            <person name="Mitter B."/>
            <person name="Shin M.V."/>
            <person name="Chain P.S."/>
            <person name="Nowak J."/>
            <person name="Sessitsch A."/>
        </authorList>
    </citation>
    <scope>NUCLEOTIDE SEQUENCE [LARGE SCALE GENOMIC DNA]</scope>
    <source>
        <strain>DSM 17436 / LMG 22146 / PsJN</strain>
    </source>
</reference>